<keyword id="KW-1185">Reference proteome</keyword>
<keyword id="KW-0687">Ribonucleoprotein</keyword>
<keyword id="KW-0689">Ribosomal protein</keyword>
<keyword id="KW-0694">RNA-binding</keyword>
<keyword id="KW-0699">rRNA-binding</keyword>
<dbReference type="EMBL" id="AE017333">
    <property type="protein sequence ID" value="AAU39110.1"/>
    <property type="molecule type" value="Genomic_DNA"/>
</dbReference>
<dbReference type="EMBL" id="CP000002">
    <property type="protein sequence ID" value="AAU21765.1"/>
    <property type="molecule type" value="Genomic_DNA"/>
</dbReference>
<dbReference type="RefSeq" id="WP_003178332.1">
    <property type="nucleotide sequence ID" value="NC_006322.1"/>
</dbReference>
<dbReference type="SMR" id="Q65PA4"/>
<dbReference type="STRING" id="279010.BL01049"/>
<dbReference type="GeneID" id="92858900"/>
<dbReference type="KEGG" id="bld:BLi00136"/>
<dbReference type="KEGG" id="bli:BL01049"/>
<dbReference type="eggNOG" id="COG0090">
    <property type="taxonomic scope" value="Bacteria"/>
</dbReference>
<dbReference type="HOGENOM" id="CLU_036235_2_1_9"/>
<dbReference type="Proteomes" id="UP000000606">
    <property type="component" value="Chromosome"/>
</dbReference>
<dbReference type="GO" id="GO:0015934">
    <property type="term" value="C:large ribosomal subunit"/>
    <property type="evidence" value="ECO:0007669"/>
    <property type="project" value="InterPro"/>
</dbReference>
<dbReference type="GO" id="GO:0019843">
    <property type="term" value="F:rRNA binding"/>
    <property type="evidence" value="ECO:0007669"/>
    <property type="project" value="UniProtKB-UniRule"/>
</dbReference>
<dbReference type="GO" id="GO:0003735">
    <property type="term" value="F:structural constituent of ribosome"/>
    <property type="evidence" value="ECO:0007669"/>
    <property type="project" value="InterPro"/>
</dbReference>
<dbReference type="GO" id="GO:0016740">
    <property type="term" value="F:transferase activity"/>
    <property type="evidence" value="ECO:0007669"/>
    <property type="project" value="InterPro"/>
</dbReference>
<dbReference type="GO" id="GO:0002181">
    <property type="term" value="P:cytoplasmic translation"/>
    <property type="evidence" value="ECO:0007669"/>
    <property type="project" value="TreeGrafter"/>
</dbReference>
<dbReference type="FunFam" id="2.30.30.30:FF:000001">
    <property type="entry name" value="50S ribosomal protein L2"/>
    <property type="match status" value="1"/>
</dbReference>
<dbReference type="FunFam" id="2.40.50.140:FF:000003">
    <property type="entry name" value="50S ribosomal protein L2"/>
    <property type="match status" value="1"/>
</dbReference>
<dbReference type="FunFam" id="4.10.950.10:FF:000001">
    <property type="entry name" value="50S ribosomal protein L2"/>
    <property type="match status" value="1"/>
</dbReference>
<dbReference type="Gene3D" id="2.30.30.30">
    <property type="match status" value="1"/>
</dbReference>
<dbReference type="Gene3D" id="2.40.50.140">
    <property type="entry name" value="Nucleic acid-binding proteins"/>
    <property type="match status" value="1"/>
</dbReference>
<dbReference type="Gene3D" id="4.10.950.10">
    <property type="entry name" value="Ribosomal protein L2, domain 3"/>
    <property type="match status" value="1"/>
</dbReference>
<dbReference type="HAMAP" id="MF_01320_B">
    <property type="entry name" value="Ribosomal_uL2_B"/>
    <property type="match status" value="1"/>
</dbReference>
<dbReference type="InterPro" id="IPR012340">
    <property type="entry name" value="NA-bd_OB-fold"/>
</dbReference>
<dbReference type="InterPro" id="IPR014722">
    <property type="entry name" value="Rib_uL2_dom2"/>
</dbReference>
<dbReference type="InterPro" id="IPR002171">
    <property type="entry name" value="Ribosomal_uL2"/>
</dbReference>
<dbReference type="InterPro" id="IPR005880">
    <property type="entry name" value="Ribosomal_uL2_bac/org-type"/>
</dbReference>
<dbReference type="InterPro" id="IPR022669">
    <property type="entry name" value="Ribosomal_uL2_C"/>
</dbReference>
<dbReference type="InterPro" id="IPR022671">
    <property type="entry name" value="Ribosomal_uL2_CS"/>
</dbReference>
<dbReference type="InterPro" id="IPR014726">
    <property type="entry name" value="Ribosomal_uL2_dom3"/>
</dbReference>
<dbReference type="InterPro" id="IPR022666">
    <property type="entry name" value="Ribosomal_uL2_RNA-bd_dom"/>
</dbReference>
<dbReference type="InterPro" id="IPR008991">
    <property type="entry name" value="Translation_prot_SH3-like_sf"/>
</dbReference>
<dbReference type="NCBIfam" id="TIGR01171">
    <property type="entry name" value="rplB_bact"/>
    <property type="match status" value="1"/>
</dbReference>
<dbReference type="PANTHER" id="PTHR13691:SF5">
    <property type="entry name" value="LARGE RIBOSOMAL SUBUNIT PROTEIN UL2M"/>
    <property type="match status" value="1"/>
</dbReference>
<dbReference type="PANTHER" id="PTHR13691">
    <property type="entry name" value="RIBOSOMAL PROTEIN L2"/>
    <property type="match status" value="1"/>
</dbReference>
<dbReference type="Pfam" id="PF00181">
    <property type="entry name" value="Ribosomal_L2"/>
    <property type="match status" value="1"/>
</dbReference>
<dbReference type="Pfam" id="PF03947">
    <property type="entry name" value="Ribosomal_L2_C"/>
    <property type="match status" value="1"/>
</dbReference>
<dbReference type="PIRSF" id="PIRSF002158">
    <property type="entry name" value="Ribosomal_L2"/>
    <property type="match status" value="1"/>
</dbReference>
<dbReference type="SMART" id="SM01383">
    <property type="entry name" value="Ribosomal_L2"/>
    <property type="match status" value="1"/>
</dbReference>
<dbReference type="SMART" id="SM01382">
    <property type="entry name" value="Ribosomal_L2_C"/>
    <property type="match status" value="1"/>
</dbReference>
<dbReference type="SUPFAM" id="SSF50249">
    <property type="entry name" value="Nucleic acid-binding proteins"/>
    <property type="match status" value="1"/>
</dbReference>
<dbReference type="SUPFAM" id="SSF50104">
    <property type="entry name" value="Translation proteins SH3-like domain"/>
    <property type="match status" value="1"/>
</dbReference>
<dbReference type="PROSITE" id="PS00467">
    <property type="entry name" value="RIBOSOMAL_L2"/>
    <property type="match status" value="1"/>
</dbReference>
<accession>Q65PA4</accession>
<accession>Q62ZP3</accession>
<organism>
    <name type="scientific">Bacillus licheniformis (strain ATCC 14580 / DSM 13 / JCM 2505 / CCUG 7422 / NBRC 12200 / NCIMB 9375 / NCTC 10341 / NRRL NRS-1264 / Gibson 46)</name>
    <dbReference type="NCBI Taxonomy" id="279010"/>
    <lineage>
        <taxon>Bacteria</taxon>
        <taxon>Bacillati</taxon>
        <taxon>Bacillota</taxon>
        <taxon>Bacilli</taxon>
        <taxon>Bacillales</taxon>
        <taxon>Bacillaceae</taxon>
        <taxon>Bacillus</taxon>
    </lineage>
</organism>
<reference key="1">
    <citation type="journal article" date="2004" name="J. Mol. Microbiol. Biotechnol.">
        <title>The complete genome sequence of Bacillus licheniformis DSM13, an organism with great industrial potential.</title>
        <authorList>
            <person name="Veith B."/>
            <person name="Herzberg C."/>
            <person name="Steckel S."/>
            <person name="Feesche J."/>
            <person name="Maurer K.H."/>
            <person name="Ehrenreich P."/>
            <person name="Baeumer S."/>
            <person name="Henne A."/>
            <person name="Liesegang H."/>
            <person name="Merkl R."/>
            <person name="Ehrenreich A."/>
            <person name="Gottschalk G."/>
        </authorList>
    </citation>
    <scope>NUCLEOTIDE SEQUENCE [LARGE SCALE GENOMIC DNA]</scope>
    <source>
        <strain>ATCC 14580 / DSM 13 / JCM 2505 / CCUG 7422 / NBRC 12200 / NCIMB 9375 / NCTC 10341 / NRRL NRS-1264 / Gibson 46</strain>
    </source>
</reference>
<reference key="2">
    <citation type="journal article" date="2004" name="Genome Biol.">
        <title>Complete genome sequence of the industrial bacterium Bacillus licheniformis and comparisons with closely related Bacillus species.</title>
        <authorList>
            <person name="Rey M.W."/>
            <person name="Ramaiya P."/>
            <person name="Nelson B.A."/>
            <person name="Brody-Karpin S.D."/>
            <person name="Zaretsky E.J."/>
            <person name="Tang M."/>
            <person name="Lopez de Leon A."/>
            <person name="Xiang H."/>
            <person name="Gusti V."/>
            <person name="Clausen I.G."/>
            <person name="Olsen P.B."/>
            <person name="Rasmussen M.D."/>
            <person name="Andersen J.T."/>
            <person name="Joergensen P.L."/>
            <person name="Larsen T.S."/>
            <person name="Sorokin A."/>
            <person name="Bolotin A."/>
            <person name="Lapidus A."/>
            <person name="Galleron N."/>
            <person name="Ehrlich S.D."/>
            <person name="Berka R.M."/>
        </authorList>
    </citation>
    <scope>NUCLEOTIDE SEQUENCE [LARGE SCALE GENOMIC DNA]</scope>
    <source>
        <strain>ATCC 14580 / DSM 13 / JCM 2505 / CCUG 7422 / NBRC 12200 / NCIMB 9375 / NCTC 10341 / NRRL NRS-1264 / Gibson 46</strain>
    </source>
</reference>
<protein>
    <recommendedName>
        <fullName evidence="1">Large ribosomal subunit protein uL2</fullName>
    </recommendedName>
    <alternativeName>
        <fullName evidence="3">50S ribosomal protein L2</fullName>
    </alternativeName>
</protein>
<name>RL2_BACLD</name>
<comment type="function">
    <text evidence="1">One of the primary rRNA binding proteins. Required for association of the 30S and 50S subunits to form the 70S ribosome, for tRNA binding and peptide bond formation. It has been suggested to have peptidyltransferase activity; this is somewhat controversial. Makes several contacts with the 16S rRNA in the 70S ribosome.</text>
</comment>
<comment type="subunit">
    <text evidence="1">Part of the 50S ribosomal subunit. Forms a bridge to the 30S subunit in the 70S ribosome.</text>
</comment>
<comment type="similarity">
    <text evidence="1">Belongs to the universal ribosomal protein uL2 family.</text>
</comment>
<evidence type="ECO:0000255" key="1">
    <source>
        <dbReference type="HAMAP-Rule" id="MF_01320"/>
    </source>
</evidence>
<evidence type="ECO:0000256" key="2">
    <source>
        <dbReference type="SAM" id="MobiDB-lite"/>
    </source>
</evidence>
<evidence type="ECO:0000305" key="3"/>
<sequence>MAIKKYKPTSNGRRGMTSSDFAEITTDQPEKSLLAPLHKKGGRNNQGKLTVRHQGGGHKRQYRIIDFKRDKDGIPGRVATVEYDPNRSANIALINYVDGEKRYILAPKGLQVGTEIMSGPEADIKVGNALPLINIPVGTVVHNIELKPGKGGQLVRSAGTSAQVLGKEGKYVLVRLNSGEVRMILSACRATIGQVGNEQHELINIGKAGRSRWKGVRPTVRGSVMNPNDHPHGGGEGRAPIGRKSPMSPWGKPTLGFKTRKKKNKSDKFIVRRRKNK</sequence>
<feature type="chain" id="PRO_0000237152" description="Large ribosomal subunit protein uL2">
    <location>
        <begin position="1"/>
        <end position="277"/>
    </location>
</feature>
<feature type="region of interest" description="Disordered" evidence="2">
    <location>
        <begin position="1"/>
        <end position="23"/>
    </location>
</feature>
<feature type="region of interest" description="Disordered" evidence="2">
    <location>
        <begin position="36"/>
        <end position="58"/>
    </location>
</feature>
<feature type="region of interest" description="Disordered" evidence="2">
    <location>
        <begin position="219"/>
        <end position="277"/>
    </location>
</feature>
<feature type="compositionally biased region" description="Polar residues" evidence="2">
    <location>
        <begin position="8"/>
        <end position="20"/>
    </location>
</feature>
<feature type="compositionally biased region" description="Basic residues" evidence="2">
    <location>
        <begin position="258"/>
        <end position="277"/>
    </location>
</feature>
<proteinExistence type="inferred from homology"/>
<gene>
    <name evidence="1" type="primary">rplB</name>
    <name type="ordered locus">BLi00136</name>
    <name type="ordered locus">BL01049</name>
</gene>